<gene>
    <name type="primary">nhr-1</name>
</gene>
<evidence type="ECO:0000255" key="1">
    <source>
        <dbReference type="PROSITE-ProRule" id="PRU00407"/>
    </source>
</evidence>
<evidence type="ECO:0000255" key="2">
    <source>
        <dbReference type="PROSITE-ProRule" id="PRU01189"/>
    </source>
</evidence>
<evidence type="ECO:0000305" key="3"/>
<accession>Q25604</accession>
<proteinExistence type="evidence at transcript level"/>
<feature type="chain" id="PRO_0000053805" description="Nuclear hormone receptor-like 1">
    <location>
        <begin position="1"/>
        <end position="367"/>
    </location>
</feature>
<feature type="domain" description="NR LBD" evidence="2">
    <location>
        <begin position="145"/>
        <end position="367"/>
    </location>
</feature>
<feature type="DNA-binding region" description="Nuclear receptor" evidence="1">
    <location>
        <begin position="32"/>
        <end position="107"/>
    </location>
</feature>
<feature type="zinc finger region" description="NR C4-type" evidence="1">
    <location>
        <begin position="35"/>
        <end position="55"/>
    </location>
</feature>
<feature type="zinc finger region" description="NR C4-type" evidence="1">
    <location>
        <begin position="71"/>
        <end position="95"/>
    </location>
</feature>
<reference key="1">
    <citation type="journal article" date="1995" name="Mol. Biochem. Parasitol.">
        <title>Characterization of genes encoding members of the nuclear hormone receptor superfamily from Onchocerca volvulus.</title>
        <authorList>
            <person name="Yates R.A."/>
            <person name="Tuan R.S."/>
            <person name="Shepley K.J."/>
            <person name="Unnasch T.R."/>
        </authorList>
    </citation>
    <scope>NUCLEOTIDE SEQUENCE [MRNA]</scope>
</reference>
<keyword id="KW-0238">DNA-binding</keyword>
<keyword id="KW-0479">Metal-binding</keyword>
<keyword id="KW-0539">Nucleus</keyword>
<keyword id="KW-0675">Receptor</keyword>
<keyword id="KW-1185">Reference proteome</keyword>
<keyword id="KW-0804">Transcription</keyword>
<keyword id="KW-0805">Transcription regulation</keyword>
<keyword id="KW-0862">Zinc</keyword>
<keyword id="KW-0863">Zinc-finger</keyword>
<protein>
    <recommendedName>
        <fullName>Nuclear hormone receptor-like 1</fullName>
    </recommendedName>
</protein>
<sequence>METKESTMNDQNTHTRSRNKAIPYLPRYMKPGQPCVVCGDDATGLHYRAITCEGCKGFFRRTVQQKIVYKCKSIERCEISKISRNICQFCRFQKCLRNGMTKSLVLNETERIAKRKMIIDNRERRKLEHLRTLLKASSLADKQDEFQSRIDQVTANYCKIMDNSLEYKFKSNKKSERLIELTKLVSQQVRQFAETIEICDTLNPSEKEEIIAKSWLVVKILQIIHEFNPTECCLMLANNTTYIPAKGNYSELDKTTKIFENLINLAISFNCMQLDNRQLALLSALLIYNPENVKRSKEKIDKIHVELWKCLQSISEMHDDDSSDLLHWPNFLVRIPYLILTVSKMQDFFQDENNINAIANILLFKFT</sequence>
<name>NHR1_ONCVO</name>
<dbReference type="EMBL" id="U19360">
    <property type="protein sequence ID" value="AAA87173.1"/>
    <property type="molecule type" value="mRNA"/>
</dbReference>
<dbReference type="SMR" id="Q25604"/>
<dbReference type="STRING" id="6282.Q25604"/>
<dbReference type="HOGENOM" id="CLU_068124_0_0_1"/>
<dbReference type="Proteomes" id="UP000024404">
    <property type="component" value="Unassembled WGS sequence"/>
</dbReference>
<dbReference type="GO" id="GO:0090575">
    <property type="term" value="C:RNA polymerase II transcription regulator complex"/>
    <property type="evidence" value="ECO:0007669"/>
    <property type="project" value="TreeGrafter"/>
</dbReference>
<dbReference type="GO" id="GO:0004879">
    <property type="term" value="F:nuclear receptor activity"/>
    <property type="evidence" value="ECO:0007669"/>
    <property type="project" value="InterPro"/>
</dbReference>
<dbReference type="GO" id="GO:0000978">
    <property type="term" value="F:RNA polymerase II cis-regulatory region sequence-specific DNA binding"/>
    <property type="evidence" value="ECO:0007669"/>
    <property type="project" value="TreeGrafter"/>
</dbReference>
<dbReference type="GO" id="GO:0008270">
    <property type="term" value="F:zinc ion binding"/>
    <property type="evidence" value="ECO:0007669"/>
    <property type="project" value="UniProtKB-KW"/>
</dbReference>
<dbReference type="GO" id="GO:0030154">
    <property type="term" value="P:cell differentiation"/>
    <property type="evidence" value="ECO:0007669"/>
    <property type="project" value="TreeGrafter"/>
</dbReference>
<dbReference type="GO" id="GO:0000122">
    <property type="term" value="P:negative regulation of transcription by RNA polymerase II"/>
    <property type="evidence" value="ECO:0007669"/>
    <property type="project" value="TreeGrafter"/>
</dbReference>
<dbReference type="GO" id="GO:0045944">
    <property type="term" value="P:positive regulation of transcription by RNA polymerase II"/>
    <property type="evidence" value="ECO:0007669"/>
    <property type="project" value="TreeGrafter"/>
</dbReference>
<dbReference type="GO" id="GO:0048384">
    <property type="term" value="P:retinoic acid receptor signaling pathway"/>
    <property type="evidence" value="ECO:0007669"/>
    <property type="project" value="TreeGrafter"/>
</dbReference>
<dbReference type="CDD" id="cd06961">
    <property type="entry name" value="NR_DBD_TR"/>
    <property type="match status" value="1"/>
</dbReference>
<dbReference type="FunFam" id="3.30.50.10:FF:000030">
    <property type="entry name" value="Nuclear Hormone Receptor family"/>
    <property type="match status" value="1"/>
</dbReference>
<dbReference type="Gene3D" id="3.30.50.10">
    <property type="entry name" value="Erythroid Transcription Factor GATA-1, subunit A"/>
    <property type="match status" value="1"/>
</dbReference>
<dbReference type="Gene3D" id="1.10.565.10">
    <property type="entry name" value="Retinoid X Receptor"/>
    <property type="match status" value="1"/>
</dbReference>
<dbReference type="InterPro" id="IPR035500">
    <property type="entry name" value="NHR-like_dom_sf"/>
</dbReference>
<dbReference type="InterPro" id="IPR000536">
    <property type="entry name" value="Nucl_hrmn_rcpt_lig-bd"/>
</dbReference>
<dbReference type="InterPro" id="IPR050234">
    <property type="entry name" value="Nuclear_hormone_rcpt_NR1"/>
</dbReference>
<dbReference type="InterPro" id="IPR001728">
    <property type="entry name" value="ThyrH_rcpt"/>
</dbReference>
<dbReference type="InterPro" id="IPR001628">
    <property type="entry name" value="Znf_hrmn_rcpt"/>
</dbReference>
<dbReference type="InterPro" id="IPR013088">
    <property type="entry name" value="Znf_NHR/GATA"/>
</dbReference>
<dbReference type="PANTHER" id="PTHR24082">
    <property type="entry name" value="NUCLEAR HORMONE RECEPTOR"/>
    <property type="match status" value="1"/>
</dbReference>
<dbReference type="PANTHER" id="PTHR24082:SF330">
    <property type="entry name" value="THYROID HORMONE RECEPTOR BETA"/>
    <property type="match status" value="1"/>
</dbReference>
<dbReference type="Pfam" id="PF00105">
    <property type="entry name" value="zf-C4"/>
    <property type="match status" value="1"/>
</dbReference>
<dbReference type="PRINTS" id="PR00047">
    <property type="entry name" value="STROIDFINGER"/>
</dbReference>
<dbReference type="PRINTS" id="PR00546">
    <property type="entry name" value="THYROIDHORMR"/>
</dbReference>
<dbReference type="SMART" id="SM00430">
    <property type="entry name" value="HOLI"/>
    <property type="match status" value="1"/>
</dbReference>
<dbReference type="SMART" id="SM00399">
    <property type="entry name" value="ZnF_C4"/>
    <property type="match status" value="1"/>
</dbReference>
<dbReference type="SUPFAM" id="SSF57716">
    <property type="entry name" value="Glucocorticoid receptor-like (DNA-binding domain)"/>
    <property type="match status" value="1"/>
</dbReference>
<dbReference type="SUPFAM" id="SSF48508">
    <property type="entry name" value="Nuclear receptor ligand-binding domain"/>
    <property type="match status" value="1"/>
</dbReference>
<dbReference type="PROSITE" id="PS51843">
    <property type="entry name" value="NR_LBD"/>
    <property type="match status" value="1"/>
</dbReference>
<dbReference type="PROSITE" id="PS00031">
    <property type="entry name" value="NUCLEAR_REC_DBD_1"/>
    <property type="match status" value="1"/>
</dbReference>
<dbReference type="PROSITE" id="PS51030">
    <property type="entry name" value="NUCLEAR_REC_DBD_2"/>
    <property type="match status" value="1"/>
</dbReference>
<comment type="subcellular location">
    <subcellularLocation>
        <location evidence="1">Nucleus</location>
    </subcellularLocation>
</comment>
<comment type="similarity">
    <text evidence="3">Belongs to the nuclear hormone receptor family.</text>
</comment>
<organism>
    <name type="scientific">Onchocerca volvulus</name>
    <dbReference type="NCBI Taxonomy" id="6282"/>
    <lineage>
        <taxon>Eukaryota</taxon>
        <taxon>Metazoa</taxon>
        <taxon>Ecdysozoa</taxon>
        <taxon>Nematoda</taxon>
        <taxon>Chromadorea</taxon>
        <taxon>Rhabditida</taxon>
        <taxon>Spirurina</taxon>
        <taxon>Spiruromorpha</taxon>
        <taxon>Filarioidea</taxon>
        <taxon>Onchocercidae</taxon>
        <taxon>Onchocerca</taxon>
    </lineage>
</organism>